<feature type="chain" id="PRO_1000071106" description="UPF0102 protein VC0395_A0112/VC395_0597">
    <location>
        <begin position="1"/>
        <end position="122"/>
    </location>
</feature>
<evidence type="ECO:0000255" key="1">
    <source>
        <dbReference type="HAMAP-Rule" id="MF_00048"/>
    </source>
</evidence>
<protein>
    <recommendedName>
        <fullName evidence="1">UPF0102 protein VC0395_A0112/VC395_0597</fullName>
    </recommendedName>
</protein>
<accession>A5F986</accession>
<accession>C3LXA6</accession>
<organism>
    <name type="scientific">Vibrio cholerae serotype O1 (strain ATCC 39541 / Classical Ogawa 395 / O395)</name>
    <dbReference type="NCBI Taxonomy" id="345073"/>
    <lineage>
        <taxon>Bacteria</taxon>
        <taxon>Pseudomonadati</taxon>
        <taxon>Pseudomonadota</taxon>
        <taxon>Gammaproteobacteria</taxon>
        <taxon>Vibrionales</taxon>
        <taxon>Vibrionaceae</taxon>
        <taxon>Vibrio</taxon>
    </lineage>
</organism>
<comment type="similarity">
    <text evidence="1">Belongs to the UPF0102 family.</text>
</comment>
<dbReference type="EMBL" id="CP000627">
    <property type="protein sequence ID" value="ABQ21682.1"/>
    <property type="molecule type" value="Genomic_DNA"/>
</dbReference>
<dbReference type="EMBL" id="CP001235">
    <property type="protein sequence ID" value="ACP08616.1"/>
    <property type="molecule type" value="Genomic_DNA"/>
</dbReference>
<dbReference type="RefSeq" id="WP_001893625.1">
    <property type="nucleotide sequence ID" value="NZ_JAACZH010000006.1"/>
</dbReference>
<dbReference type="SMR" id="A5F986"/>
<dbReference type="KEGG" id="vco:VC0395_A0112"/>
<dbReference type="KEGG" id="vcr:VC395_0597"/>
<dbReference type="PATRIC" id="fig|345073.21.peg.583"/>
<dbReference type="eggNOG" id="COG0792">
    <property type="taxonomic scope" value="Bacteria"/>
</dbReference>
<dbReference type="HOGENOM" id="CLU_115353_1_1_6"/>
<dbReference type="OrthoDB" id="9794876at2"/>
<dbReference type="Proteomes" id="UP000000249">
    <property type="component" value="Chromosome 2"/>
</dbReference>
<dbReference type="GO" id="GO:0003676">
    <property type="term" value="F:nucleic acid binding"/>
    <property type="evidence" value="ECO:0007669"/>
    <property type="project" value="InterPro"/>
</dbReference>
<dbReference type="CDD" id="cd20736">
    <property type="entry name" value="PoNe_Nuclease"/>
    <property type="match status" value="1"/>
</dbReference>
<dbReference type="Gene3D" id="3.40.1350.10">
    <property type="match status" value="1"/>
</dbReference>
<dbReference type="HAMAP" id="MF_00048">
    <property type="entry name" value="UPF0102"/>
    <property type="match status" value="1"/>
</dbReference>
<dbReference type="InterPro" id="IPR011335">
    <property type="entry name" value="Restrct_endonuc-II-like"/>
</dbReference>
<dbReference type="InterPro" id="IPR011856">
    <property type="entry name" value="tRNA_endonuc-like_dom_sf"/>
</dbReference>
<dbReference type="InterPro" id="IPR003509">
    <property type="entry name" value="UPF0102_YraN-like"/>
</dbReference>
<dbReference type="NCBIfam" id="NF009150">
    <property type="entry name" value="PRK12497.1-3"/>
    <property type="match status" value="1"/>
</dbReference>
<dbReference type="NCBIfam" id="TIGR00252">
    <property type="entry name" value="YraN family protein"/>
    <property type="match status" value="1"/>
</dbReference>
<dbReference type="PANTHER" id="PTHR34039">
    <property type="entry name" value="UPF0102 PROTEIN YRAN"/>
    <property type="match status" value="1"/>
</dbReference>
<dbReference type="PANTHER" id="PTHR34039:SF1">
    <property type="entry name" value="UPF0102 PROTEIN YRAN"/>
    <property type="match status" value="1"/>
</dbReference>
<dbReference type="Pfam" id="PF02021">
    <property type="entry name" value="UPF0102"/>
    <property type="match status" value="1"/>
</dbReference>
<dbReference type="SUPFAM" id="SSF52980">
    <property type="entry name" value="Restriction endonuclease-like"/>
    <property type="match status" value="1"/>
</dbReference>
<gene>
    <name type="ordered locus">VC0395_A0112</name>
    <name type="ordered locus">VC395_0597</name>
</gene>
<name>Y1312_VIBC3</name>
<proteinExistence type="inferred from homology"/>
<sequence>MVFVNSRHQGNHYEQMAADYLRRQGLTLVTQNVNYRFGELDLIMRDGNTLVFVEVRYRNNTQHGHAAETVTRTKRARLIKAANCWMLANKMNSHSADFRFDVIAIHQQGQHIDWLKNAITEG</sequence>
<reference key="1">
    <citation type="submission" date="2007-03" db="EMBL/GenBank/DDBJ databases">
        <authorList>
            <person name="Heidelberg J."/>
        </authorList>
    </citation>
    <scope>NUCLEOTIDE SEQUENCE [LARGE SCALE GENOMIC DNA]</scope>
    <source>
        <strain>ATCC 39541 / Classical Ogawa 395 / O395</strain>
    </source>
</reference>
<reference key="2">
    <citation type="journal article" date="2008" name="PLoS ONE">
        <title>A recalibrated molecular clock and independent origins for the cholera pandemic clones.</title>
        <authorList>
            <person name="Feng L."/>
            <person name="Reeves P.R."/>
            <person name="Lan R."/>
            <person name="Ren Y."/>
            <person name="Gao C."/>
            <person name="Zhou Z."/>
            <person name="Ren Y."/>
            <person name="Cheng J."/>
            <person name="Wang W."/>
            <person name="Wang J."/>
            <person name="Qian W."/>
            <person name="Li D."/>
            <person name="Wang L."/>
        </authorList>
    </citation>
    <scope>NUCLEOTIDE SEQUENCE [LARGE SCALE GENOMIC DNA]</scope>
    <source>
        <strain>ATCC 39541 / Classical Ogawa 395 / O395</strain>
    </source>
</reference>